<proteinExistence type="inferred from homology"/>
<name>SYQ_SALPK</name>
<dbReference type="EC" id="6.1.1.18" evidence="1"/>
<dbReference type="EMBL" id="FM200053">
    <property type="protein sequence ID" value="CAR60115.1"/>
    <property type="molecule type" value="Genomic_DNA"/>
</dbReference>
<dbReference type="RefSeq" id="WP_001287181.1">
    <property type="nucleotide sequence ID" value="NC_011147.1"/>
</dbReference>
<dbReference type="SMR" id="B5BCC3"/>
<dbReference type="KEGG" id="sek:SSPA1916"/>
<dbReference type="HOGENOM" id="CLU_001882_2_3_6"/>
<dbReference type="Proteomes" id="UP000001869">
    <property type="component" value="Chromosome"/>
</dbReference>
<dbReference type="GO" id="GO:0005829">
    <property type="term" value="C:cytosol"/>
    <property type="evidence" value="ECO:0007669"/>
    <property type="project" value="TreeGrafter"/>
</dbReference>
<dbReference type="GO" id="GO:0005524">
    <property type="term" value="F:ATP binding"/>
    <property type="evidence" value="ECO:0007669"/>
    <property type="project" value="UniProtKB-UniRule"/>
</dbReference>
<dbReference type="GO" id="GO:0004819">
    <property type="term" value="F:glutamine-tRNA ligase activity"/>
    <property type="evidence" value="ECO:0007669"/>
    <property type="project" value="UniProtKB-UniRule"/>
</dbReference>
<dbReference type="GO" id="GO:0006425">
    <property type="term" value="P:glutaminyl-tRNA aminoacylation"/>
    <property type="evidence" value="ECO:0007669"/>
    <property type="project" value="InterPro"/>
</dbReference>
<dbReference type="GO" id="GO:0006424">
    <property type="term" value="P:glutamyl-tRNA aminoacylation"/>
    <property type="evidence" value="ECO:0007669"/>
    <property type="project" value="UniProtKB-UniRule"/>
</dbReference>
<dbReference type="CDD" id="cd00807">
    <property type="entry name" value="GlnRS_core"/>
    <property type="match status" value="1"/>
</dbReference>
<dbReference type="FunFam" id="1.10.1160.10:FF:000001">
    <property type="entry name" value="Glutamine--tRNA ligase"/>
    <property type="match status" value="1"/>
</dbReference>
<dbReference type="FunFam" id="2.40.240.10:FF:000001">
    <property type="entry name" value="Glutamine--tRNA ligase"/>
    <property type="match status" value="1"/>
</dbReference>
<dbReference type="FunFam" id="2.40.240.10:FF:000003">
    <property type="entry name" value="Glutamine--tRNA ligase"/>
    <property type="match status" value="1"/>
</dbReference>
<dbReference type="FunFam" id="3.90.800.10:FF:000001">
    <property type="entry name" value="Glutamine--tRNA ligase"/>
    <property type="match status" value="1"/>
</dbReference>
<dbReference type="FunFam" id="3.40.50.620:FF:000037">
    <property type="entry name" value="Glutamine--tRNA ligase cytoplasmic"/>
    <property type="match status" value="1"/>
</dbReference>
<dbReference type="Gene3D" id="1.10.1160.10">
    <property type="entry name" value="Glutamyl-trna Synthetase, Domain 2"/>
    <property type="match status" value="1"/>
</dbReference>
<dbReference type="Gene3D" id="3.90.800.10">
    <property type="entry name" value="Glutamyl-tRNA Synthetase, Domain 3"/>
    <property type="match status" value="1"/>
</dbReference>
<dbReference type="Gene3D" id="3.40.50.620">
    <property type="entry name" value="HUPs"/>
    <property type="match status" value="1"/>
</dbReference>
<dbReference type="Gene3D" id="2.40.240.10">
    <property type="entry name" value="Ribosomal Protein L25, Chain P"/>
    <property type="match status" value="2"/>
</dbReference>
<dbReference type="HAMAP" id="MF_00126">
    <property type="entry name" value="Gln_tRNA_synth"/>
    <property type="match status" value="1"/>
</dbReference>
<dbReference type="InterPro" id="IPR001412">
    <property type="entry name" value="aa-tRNA-synth_I_CS"/>
</dbReference>
<dbReference type="InterPro" id="IPR004514">
    <property type="entry name" value="Gln-tRNA-synth"/>
</dbReference>
<dbReference type="InterPro" id="IPR050132">
    <property type="entry name" value="Gln/Glu-tRNA_Ligase"/>
</dbReference>
<dbReference type="InterPro" id="IPR022861">
    <property type="entry name" value="Gln_tRNA_ligase_bac"/>
</dbReference>
<dbReference type="InterPro" id="IPR000924">
    <property type="entry name" value="Glu/Gln-tRNA-synth"/>
</dbReference>
<dbReference type="InterPro" id="IPR020058">
    <property type="entry name" value="Glu/Gln-tRNA-synth_Ib_cat-dom"/>
</dbReference>
<dbReference type="InterPro" id="IPR020059">
    <property type="entry name" value="Glu/Gln-tRNA-synth_Ib_codon-bd"/>
</dbReference>
<dbReference type="InterPro" id="IPR020061">
    <property type="entry name" value="Glu_tRNA_lig_a-bdl"/>
</dbReference>
<dbReference type="InterPro" id="IPR020056">
    <property type="entry name" value="Rbsml_bL25/Gln-tRNA_synth_N"/>
</dbReference>
<dbReference type="InterPro" id="IPR011035">
    <property type="entry name" value="Ribosomal_bL25/Gln-tRNA_synth"/>
</dbReference>
<dbReference type="InterPro" id="IPR014729">
    <property type="entry name" value="Rossmann-like_a/b/a_fold"/>
</dbReference>
<dbReference type="InterPro" id="IPR049437">
    <property type="entry name" value="tRNA-synt_1c_C2"/>
</dbReference>
<dbReference type="NCBIfam" id="TIGR00440">
    <property type="entry name" value="glnS"/>
    <property type="match status" value="1"/>
</dbReference>
<dbReference type="NCBIfam" id="NF011291">
    <property type="entry name" value="PRK14703.1"/>
    <property type="match status" value="1"/>
</dbReference>
<dbReference type="PANTHER" id="PTHR43097:SF5">
    <property type="entry name" value="GLUTAMATE--TRNA LIGASE"/>
    <property type="match status" value="1"/>
</dbReference>
<dbReference type="PANTHER" id="PTHR43097">
    <property type="entry name" value="GLUTAMINE-TRNA LIGASE"/>
    <property type="match status" value="1"/>
</dbReference>
<dbReference type="Pfam" id="PF00749">
    <property type="entry name" value="tRNA-synt_1c"/>
    <property type="match status" value="1"/>
</dbReference>
<dbReference type="Pfam" id="PF03950">
    <property type="entry name" value="tRNA-synt_1c_C"/>
    <property type="match status" value="1"/>
</dbReference>
<dbReference type="Pfam" id="PF20974">
    <property type="entry name" value="tRNA-synt_1c_C2"/>
    <property type="match status" value="1"/>
</dbReference>
<dbReference type="PRINTS" id="PR00987">
    <property type="entry name" value="TRNASYNTHGLU"/>
</dbReference>
<dbReference type="SUPFAM" id="SSF52374">
    <property type="entry name" value="Nucleotidylyl transferase"/>
    <property type="match status" value="1"/>
</dbReference>
<dbReference type="SUPFAM" id="SSF50715">
    <property type="entry name" value="Ribosomal protein L25-like"/>
    <property type="match status" value="1"/>
</dbReference>
<dbReference type="PROSITE" id="PS00178">
    <property type="entry name" value="AA_TRNA_LIGASE_I"/>
    <property type="match status" value="1"/>
</dbReference>
<keyword id="KW-0030">Aminoacyl-tRNA synthetase</keyword>
<keyword id="KW-0067">ATP-binding</keyword>
<keyword id="KW-0963">Cytoplasm</keyword>
<keyword id="KW-0436">Ligase</keyword>
<keyword id="KW-0547">Nucleotide-binding</keyword>
<keyword id="KW-0648">Protein biosynthesis</keyword>
<sequence length="555" mass="63538">MSEAEARPTNFIRQIIDEDLASGKHTTVHTRFPPEPNGYLHIGHAKSICLNFGIAQDYQGQCNLRFDDTNPVKEDIEYVDSIKNDVEWLGFHWSGDIRYSSDYFDQLHAYAVELINKGLAYVDELTPEQIREYRGTLTAPGKNSPFRDRSVEENLALFEKMRTGGFEEGKACLRAKIDMASPFIVMRDPVLYRIKFAEHHQTGNKWCIYPMYDFTHCISDALEGITHSLCTLEFQDNRRLYDWVLDNITIPVHPRQYEFSRLNLEYTVMSKRKLNLLVTDKHVEGWDDPRMPTISGLRRRGYTAASIREFCKRIGVTKQDNTIEMASLESCIREDLNENAPRAMAVIDPVKLVIENYPQGESEMVTMPNHPNKPEMGSREVPFSGEIWIDRADFREEANKQYKRLVMGKEVRLRNAYVIKAERVEKDAEGNITTIFCTYDADTLSKDPADGRKVKGVIHWVSAAHALPIEIRLYDRLFSVPNPGAAEDFLSVINPESLVIKQGYGEPSLKAAVAGKAFQFEREGYFCLDSRYATADKLVFNRTVGLRDTWAKAGE</sequence>
<comment type="catalytic activity">
    <reaction evidence="1">
        <text>tRNA(Gln) + L-glutamine + ATP = L-glutaminyl-tRNA(Gln) + AMP + diphosphate</text>
        <dbReference type="Rhea" id="RHEA:20121"/>
        <dbReference type="Rhea" id="RHEA-COMP:9662"/>
        <dbReference type="Rhea" id="RHEA-COMP:9681"/>
        <dbReference type="ChEBI" id="CHEBI:30616"/>
        <dbReference type="ChEBI" id="CHEBI:33019"/>
        <dbReference type="ChEBI" id="CHEBI:58359"/>
        <dbReference type="ChEBI" id="CHEBI:78442"/>
        <dbReference type="ChEBI" id="CHEBI:78521"/>
        <dbReference type="ChEBI" id="CHEBI:456215"/>
        <dbReference type="EC" id="6.1.1.18"/>
    </reaction>
</comment>
<comment type="subunit">
    <text evidence="1">Monomer.</text>
</comment>
<comment type="subcellular location">
    <subcellularLocation>
        <location evidence="1">Cytoplasm</location>
    </subcellularLocation>
</comment>
<comment type="similarity">
    <text evidence="1">Belongs to the class-I aminoacyl-tRNA synthetase family.</text>
</comment>
<organism>
    <name type="scientific">Salmonella paratyphi A (strain AKU_12601)</name>
    <dbReference type="NCBI Taxonomy" id="554290"/>
    <lineage>
        <taxon>Bacteria</taxon>
        <taxon>Pseudomonadati</taxon>
        <taxon>Pseudomonadota</taxon>
        <taxon>Gammaproteobacteria</taxon>
        <taxon>Enterobacterales</taxon>
        <taxon>Enterobacteriaceae</taxon>
        <taxon>Salmonella</taxon>
    </lineage>
</organism>
<accession>B5BCC3</accession>
<protein>
    <recommendedName>
        <fullName evidence="1">Glutamine--tRNA ligase</fullName>
        <ecNumber evidence="1">6.1.1.18</ecNumber>
    </recommendedName>
    <alternativeName>
        <fullName evidence="1">Glutaminyl-tRNA synthetase</fullName>
        <shortName evidence="1">GlnRS</shortName>
    </alternativeName>
</protein>
<reference key="1">
    <citation type="journal article" date="2009" name="BMC Genomics">
        <title>Pseudogene accumulation in the evolutionary histories of Salmonella enterica serovars Paratyphi A and Typhi.</title>
        <authorList>
            <person name="Holt K.E."/>
            <person name="Thomson N.R."/>
            <person name="Wain J."/>
            <person name="Langridge G.C."/>
            <person name="Hasan R."/>
            <person name="Bhutta Z.A."/>
            <person name="Quail M.A."/>
            <person name="Norbertczak H."/>
            <person name="Walker D."/>
            <person name="Simmonds M."/>
            <person name="White B."/>
            <person name="Bason N."/>
            <person name="Mungall K."/>
            <person name="Dougan G."/>
            <person name="Parkhill J."/>
        </authorList>
    </citation>
    <scope>NUCLEOTIDE SEQUENCE [LARGE SCALE GENOMIC DNA]</scope>
    <source>
        <strain>AKU_12601</strain>
    </source>
</reference>
<evidence type="ECO:0000255" key="1">
    <source>
        <dbReference type="HAMAP-Rule" id="MF_00126"/>
    </source>
</evidence>
<feature type="chain" id="PRO_1000095514" description="Glutamine--tRNA ligase">
    <location>
        <begin position="1"/>
        <end position="555"/>
    </location>
</feature>
<feature type="region of interest" description="Interaction with tRNA" evidence="1">
    <location>
        <begin position="317"/>
        <end position="324"/>
    </location>
</feature>
<feature type="short sequence motif" description="'HIGH' region" evidence="1">
    <location>
        <begin position="34"/>
        <end position="44"/>
    </location>
</feature>
<feature type="short sequence motif" description="'KMSKS' region" evidence="1">
    <location>
        <begin position="268"/>
        <end position="272"/>
    </location>
</feature>
<feature type="binding site" evidence="1">
    <location>
        <begin position="35"/>
        <end position="37"/>
    </location>
    <ligand>
        <name>ATP</name>
        <dbReference type="ChEBI" id="CHEBI:30616"/>
    </ligand>
</feature>
<feature type="binding site" evidence="1">
    <location>
        <begin position="41"/>
        <end position="47"/>
    </location>
    <ligand>
        <name>ATP</name>
        <dbReference type="ChEBI" id="CHEBI:30616"/>
    </ligand>
</feature>
<feature type="binding site" evidence="1">
    <location>
        <position position="67"/>
    </location>
    <ligand>
        <name>L-glutamine</name>
        <dbReference type="ChEBI" id="CHEBI:58359"/>
    </ligand>
</feature>
<feature type="binding site" evidence="1">
    <location>
        <position position="212"/>
    </location>
    <ligand>
        <name>L-glutamine</name>
        <dbReference type="ChEBI" id="CHEBI:58359"/>
    </ligand>
</feature>
<feature type="binding site" evidence="1">
    <location>
        <position position="231"/>
    </location>
    <ligand>
        <name>ATP</name>
        <dbReference type="ChEBI" id="CHEBI:30616"/>
    </ligand>
</feature>
<feature type="binding site" evidence="1">
    <location>
        <begin position="261"/>
        <end position="262"/>
    </location>
    <ligand>
        <name>ATP</name>
        <dbReference type="ChEBI" id="CHEBI:30616"/>
    </ligand>
</feature>
<feature type="binding site" evidence="1">
    <location>
        <begin position="269"/>
        <end position="271"/>
    </location>
    <ligand>
        <name>ATP</name>
        <dbReference type="ChEBI" id="CHEBI:30616"/>
    </ligand>
</feature>
<gene>
    <name evidence="1" type="primary">glnS</name>
    <name type="ordered locus">SSPA1916</name>
</gene>